<gene>
    <name evidence="1" type="primary">ribB</name>
    <name type="ordered locus">PSHAa1233</name>
</gene>
<reference key="1">
    <citation type="journal article" date="2005" name="Genome Res.">
        <title>Coping with cold: the genome of the versatile marine Antarctica bacterium Pseudoalteromonas haloplanktis TAC125.</title>
        <authorList>
            <person name="Medigue C."/>
            <person name="Krin E."/>
            <person name="Pascal G."/>
            <person name="Barbe V."/>
            <person name="Bernsel A."/>
            <person name="Bertin P.N."/>
            <person name="Cheung F."/>
            <person name="Cruveiller S."/>
            <person name="D'Amico S."/>
            <person name="Duilio A."/>
            <person name="Fang G."/>
            <person name="Feller G."/>
            <person name="Ho C."/>
            <person name="Mangenot S."/>
            <person name="Marino G."/>
            <person name="Nilsson J."/>
            <person name="Parrilli E."/>
            <person name="Rocha E.P.C."/>
            <person name="Rouy Z."/>
            <person name="Sekowska A."/>
            <person name="Tutino M.L."/>
            <person name="Vallenet D."/>
            <person name="von Heijne G."/>
            <person name="Danchin A."/>
        </authorList>
    </citation>
    <scope>NUCLEOTIDE SEQUENCE [LARGE SCALE GENOMIC DNA]</scope>
    <source>
        <strain>TAC 125</strain>
    </source>
</reference>
<proteinExistence type="inferred from homology"/>
<comment type="function">
    <text evidence="1">Catalyzes the conversion of D-ribulose 5-phosphate to formate and 3,4-dihydroxy-2-butanone 4-phosphate.</text>
</comment>
<comment type="catalytic activity">
    <reaction evidence="1">
        <text>D-ribulose 5-phosphate = (2S)-2-hydroxy-3-oxobutyl phosphate + formate + H(+)</text>
        <dbReference type="Rhea" id="RHEA:18457"/>
        <dbReference type="ChEBI" id="CHEBI:15378"/>
        <dbReference type="ChEBI" id="CHEBI:15740"/>
        <dbReference type="ChEBI" id="CHEBI:58121"/>
        <dbReference type="ChEBI" id="CHEBI:58830"/>
        <dbReference type="EC" id="4.1.99.12"/>
    </reaction>
</comment>
<comment type="cofactor">
    <cofactor evidence="1">
        <name>Mg(2+)</name>
        <dbReference type="ChEBI" id="CHEBI:18420"/>
    </cofactor>
    <cofactor evidence="1">
        <name>Mn(2+)</name>
        <dbReference type="ChEBI" id="CHEBI:29035"/>
    </cofactor>
    <text evidence="1">Binds 2 divalent metal cations per subunit. Magnesium or manganese.</text>
</comment>
<comment type="pathway">
    <text evidence="1">Cofactor biosynthesis; riboflavin biosynthesis; 2-hydroxy-3-oxobutyl phosphate from D-ribulose 5-phosphate: step 1/1.</text>
</comment>
<comment type="subunit">
    <text evidence="1">Homodimer.</text>
</comment>
<comment type="similarity">
    <text evidence="1">Belongs to the DHBP synthase family.</text>
</comment>
<feature type="chain" id="PRO_1000040620" description="3,4-dihydroxy-2-butanone 4-phosphate synthase">
    <location>
        <begin position="1"/>
        <end position="217"/>
    </location>
</feature>
<feature type="binding site" evidence="1">
    <location>
        <begin position="37"/>
        <end position="38"/>
    </location>
    <ligand>
        <name>D-ribulose 5-phosphate</name>
        <dbReference type="ChEBI" id="CHEBI:58121"/>
    </ligand>
</feature>
<feature type="binding site" evidence="1">
    <location>
        <position position="38"/>
    </location>
    <ligand>
        <name>Mg(2+)</name>
        <dbReference type="ChEBI" id="CHEBI:18420"/>
        <label>1</label>
    </ligand>
</feature>
<feature type="binding site" evidence="1">
    <location>
        <position position="38"/>
    </location>
    <ligand>
        <name>Mg(2+)</name>
        <dbReference type="ChEBI" id="CHEBI:18420"/>
        <label>2</label>
    </ligand>
</feature>
<feature type="binding site" evidence="1">
    <location>
        <position position="42"/>
    </location>
    <ligand>
        <name>D-ribulose 5-phosphate</name>
        <dbReference type="ChEBI" id="CHEBI:58121"/>
    </ligand>
</feature>
<feature type="binding site" evidence="1">
    <location>
        <begin position="150"/>
        <end position="154"/>
    </location>
    <ligand>
        <name>D-ribulose 5-phosphate</name>
        <dbReference type="ChEBI" id="CHEBI:58121"/>
    </ligand>
</feature>
<feature type="binding site" evidence="1">
    <location>
        <position position="153"/>
    </location>
    <ligand>
        <name>Mg(2+)</name>
        <dbReference type="ChEBI" id="CHEBI:18420"/>
        <label>2</label>
    </ligand>
</feature>
<feature type="binding site" evidence="1">
    <location>
        <position position="174"/>
    </location>
    <ligand>
        <name>D-ribulose 5-phosphate</name>
        <dbReference type="ChEBI" id="CHEBI:58121"/>
    </ligand>
</feature>
<feature type="site" description="Essential for catalytic activity" evidence="1">
    <location>
        <position position="136"/>
    </location>
</feature>
<feature type="site" description="Essential for catalytic activity" evidence="1">
    <location>
        <position position="174"/>
    </location>
</feature>
<keyword id="KW-0456">Lyase</keyword>
<keyword id="KW-0460">Magnesium</keyword>
<keyword id="KW-0464">Manganese</keyword>
<keyword id="KW-0479">Metal-binding</keyword>
<keyword id="KW-1185">Reference proteome</keyword>
<keyword id="KW-0686">Riboflavin biosynthesis</keyword>
<evidence type="ECO:0000255" key="1">
    <source>
        <dbReference type="HAMAP-Rule" id="MF_00180"/>
    </source>
</evidence>
<sequence>MIQSLLTQFGEPLTRVENAITALQQGQGVLVVDDENRENEGDFVFSAEHLTTAQMAEMIREGSGIVCLCMGEERIKQLDLPQMVTHNTSQNNTAYTITIEAKEGVTTGVSAADRVTTIKAATADNAKPEDLSRPGHVFGLKAKTGGVLVRRGHTEASVDLMQLAGLKPFGVICELTNPDGSMARLPEVSGYANKHNMPVVSIEDLVQYIQIAQQKVS</sequence>
<organism>
    <name type="scientific">Pseudoalteromonas translucida (strain TAC 125)</name>
    <dbReference type="NCBI Taxonomy" id="326442"/>
    <lineage>
        <taxon>Bacteria</taxon>
        <taxon>Pseudomonadati</taxon>
        <taxon>Pseudomonadota</taxon>
        <taxon>Gammaproteobacteria</taxon>
        <taxon>Alteromonadales</taxon>
        <taxon>Pseudoalteromonadaceae</taxon>
        <taxon>Pseudoalteromonas</taxon>
    </lineage>
</organism>
<accession>Q3IKS6</accession>
<protein>
    <recommendedName>
        <fullName evidence="1">3,4-dihydroxy-2-butanone 4-phosphate synthase</fullName>
        <shortName evidence="1">DHBP synthase</shortName>
        <ecNumber evidence="1">4.1.99.12</ecNumber>
    </recommendedName>
</protein>
<dbReference type="EC" id="4.1.99.12" evidence="1"/>
<dbReference type="EMBL" id="CR954246">
    <property type="protein sequence ID" value="CAI86308.1"/>
    <property type="molecule type" value="Genomic_DNA"/>
</dbReference>
<dbReference type="SMR" id="Q3IKS6"/>
<dbReference type="STRING" id="326442.PSHAa1233"/>
<dbReference type="KEGG" id="pha:PSHAa1233"/>
<dbReference type="PATRIC" id="fig|326442.8.peg.1187"/>
<dbReference type="eggNOG" id="COG0108">
    <property type="taxonomic scope" value="Bacteria"/>
</dbReference>
<dbReference type="HOGENOM" id="CLU_020273_3_0_6"/>
<dbReference type="BioCyc" id="PHAL326442:PSHA_RS06085-MONOMER"/>
<dbReference type="UniPathway" id="UPA00275">
    <property type="reaction ID" value="UER00399"/>
</dbReference>
<dbReference type="Proteomes" id="UP000006843">
    <property type="component" value="Chromosome I"/>
</dbReference>
<dbReference type="GO" id="GO:0005829">
    <property type="term" value="C:cytosol"/>
    <property type="evidence" value="ECO:0007669"/>
    <property type="project" value="TreeGrafter"/>
</dbReference>
<dbReference type="GO" id="GO:0008686">
    <property type="term" value="F:3,4-dihydroxy-2-butanone-4-phosphate synthase activity"/>
    <property type="evidence" value="ECO:0007669"/>
    <property type="project" value="UniProtKB-UniRule"/>
</dbReference>
<dbReference type="GO" id="GO:0000287">
    <property type="term" value="F:magnesium ion binding"/>
    <property type="evidence" value="ECO:0007669"/>
    <property type="project" value="UniProtKB-UniRule"/>
</dbReference>
<dbReference type="GO" id="GO:0030145">
    <property type="term" value="F:manganese ion binding"/>
    <property type="evidence" value="ECO:0007669"/>
    <property type="project" value="UniProtKB-UniRule"/>
</dbReference>
<dbReference type="GO" id="GO:0009231">
    <property type="term" value="P:riboflavin biosynthetic process"/>
    <property type="evidence" value="ECO:0007669"/>
    <property type="project" value="UniProtKB-UniRule"/>
</dbReference>
<dbReference type="FunFam" id="3.90.870.10:FF:000002">
    <property type="entry name" value="3,4-dihydroxy-2-butanone 4-phosphate synthase"/>
    <property type="match status" value="1"/>
</dbReference>
<dbReference type="Gene3D" id="3.90.870.10">
    <property type="entry name" value="DHBP synthase"/>
    <property type="match status" value="1"/>
</dbReference>
<dbReference type="HAMAP" id="MF_00180">
    <property type="entry name" value="RibB"/>
    <property type="match status" value="1"/>
</dbReference>
<dbReference type="InterPro" id="IPR017945">
    <property type="entry name" value="DHBP_synth_RibB-like_a/b_dom"/>
</dbReference>
<dbReference type="InterPro" id="IPR000422">
    <property type="entry name" value="DHBP_synthase_RibB"/>
</dbReference>
<dbReference type="NCBIfam" id="TIGR00506">
    <property type="entry name" value="ribB"/>
    <property type="match status" value="1"/>
</dbReference>
<dbReference type="PANTHER" id="PTHR21327:SF38">
    <property type="entry name" value="3,4-DIHYDROXY-2-BUTANONE 4-PHOSPHATE SYNTHASE"/>
    <property type="match status" value="1"/>
</dbReference>
<dbReference type="PANTHER" id="PTHR21327">
    <property type="entry name" value="GTP CYCLOHYDROLASE II-RELATED"/>
    <property type="match status" value="1"/>
</dbReference>
<dbReference type="Pfam" id="PF00926">
    <property type="entry name" value="DHBP_synthase"/>
    <property type="match status" value="1"/>
</dbReference>
<dbReference type="SUPFAM" id="SSF55821">
    <property type="entry name" value="YrdC/RibB"/>
    <property type="match status" value="1"/>
</dbReference>
<name>RIBB_PSET1</name>